<proteinExistence type="evidence at protein level"/>
<organism>
    <name type="scientific">Rattus norvegicus</name>
    <name type="common">Rat</name>
    <dbReference type="NCBI Taxonomy" id="10116"/>
    <lineage>
        <taxon>Eukaryota</taxon>
        <taxon>Metazoa</taxon>
        <taxon>Chordata</taxon>
        <taxon>Craniata</taxon>
        <taxon>Vertebrata</taxon>
        <taxon>Euteleostomi</taxon>
        <taxon>Mammalia</taxon>
        <taxon>Eutheria</taxon>
        <taxon>Euarchontoglires</taxon>
        <taxon>Glires</taxon>
        <taxon>Rodentia</taxon>
        <taxon>Myomorpha</taxon>
        <taxon>Muroidea</taxon>
        <taxon>Muridae</taxon>
        <taxon>Murinae</taxon>
        <taxon>Rattus</taxon>
    </lineage>
</organism>
<accession>Q5XI81</accession>
<keyword id="KW-0007">Acetylation</keyword>
<keyword id="KW-0966">Cell projection</keyword>
<keyword id="KW-0963">Cytoplasm</keyword>
<keyword id="KW-0217">Developmental protein</keyword>
<keyword id="KW-0221">Differentiation</keyword>
<keyword id="KW-1017">Isopeptide bond</keyword>
<keyword id="KW-0488">Methylation</keyword>
<keyword id="KW-0517">Myogenesis</keyword>
<keyword id="KW-0539">Nucleus</keyword>
<keyword id="KW-0597">Phosphoprotein</keyword>
<keyword id="KW-1185">Reference proteome</keyword>
<keyword id="KW-0677">Repeat</keyword>
<keyword id="KW-0694">RNA-binding</keyword>
<keyword id="KW-0744">Spermatogenesis</keyword>
<keyword id="KW-0770">Synapse</keyword>
<keyword id="KW-0832">Ubl conjugation</keyword>
<gene>
    <name evidence="11" type="primary">Fxr1</name>
    <name evidence="10" type="synonym">Fxr1h</name>
</gene>
<comment type="function">
    <text evidence="2 4">mRNA-binding protein that acts as a regulator of mRNAs translation and/or stability, and which is required for various processes, such as neurogenesis, muscle development and spermatogenesis. Specifically binds to AU-rich elements (AREs) in the 3'-UTR of target mRNAs. Promotes formation of some phase-separated membraneless compartment by undergoing liquid-liquid phase separation upon binding to AREs-containing mRNAs, leading to assemble mRNAs into cytoplasmic ribonucleoprotein granules that concentrate mRNAs with associated regulatory factors. Required to activate translation of stored mRNAs during late spermatogenesis: acts by undergoing liquid-liquid phase separation to assemble target mRNAs into cytoplasmic ribonucleoprotein granules that recruit translation initiation factor EIF4G3 to activate translation of stored mRNAs in late spermatids (By similarity). Promotes translation of MYC transcripts by recruiting the eIF4F complex to the translation start site. Acts as a negative regulator of inflammation in response to IL19 by promoting destabilization of pro-inflammatory transcripts (By similarity). Also acts as an inhibitor of inflammation by binding to TNF mRNA, decreasing TNF protein production. Acts as a negative regulator of AMPA receptor GRIA2/GluA2 synthesis during long-lasting synaptic potentiation of hippocampal neurons by binding to GRIA2/GluA2 mRNA, thereby inhibiting its translation. Regulates proliferation of adult neural stem cells by binding to CDKN1A mRNA and promoting its expression. Acts as a regulator of sleep and synaptic homeostasis by regulating translation of transcripts in neurons. Required for embryonic and postnatal development of muscle tissue by undergoing liquid-liquid phase separation to assemble target mRNAs into cytoplasmic ribonucleoprotein granules (By similarity). Involved in the nuclear pore complex localization to the nuclear envelope by preventing cytoplasmic aggregation of nucleoporins: acts by preventing ectopic phase separation of nucleoporins in the cytoplasm via a microtubule-dependent mechanism (By similarity). Plays a role in the stabilization of PKP2 mRNA and therefore protein abundance, via its interaction with PKP3 (By similarity). May also do the same for PKP2, PKP3 and DSP via its interaction with PKP1 (By similarity). Forms a cytoplasmic messenger ribonucleoprotein (mRNP) network by packaging long mRNAs, serving as a scaffold that recruits proteins and signaling molecules. This network facilitates signaling reactions by maintaining proximity between kinases and substrates, crucial for processes like actomyosin reorganization (By similarity).</text>
</comment>
<comment type="subunit">
    <text evidence="2 4">Homodimer (via CC domains); homodiremization is required for FXR1-network nucleation (By similarity). Interacts with FMR1. Interacts with FRX2. Interacts with TDRD3. Interacts with HABP4 (By similarity). Interacts with CYFIP2 but not with CYFIP1. Interacts with EIF4G3; promoting translation of target mRNAs (By similarity). Interacts with ELAVL1. Interacts with CEP63; inhibiting 'Lys-63'-linked ubiquitination (By similarity). Interacts with PKP3; the interaction facilitates the binding of PKP3 to PKP2 mRNA (By similarity). Interacts with PKP1; the interaction may facilitate the binding of PKP1 to PKP2, PKP3 and DSP mRNA (By similarity).</text>
</comment>
<comment type="subcellular location">
    <subcellularLocation>
        <location evidence="4">Cytoplasm</location>
        <location evidence="4">Cytoplasmic ribonucleoprotein granule</location>
    </subcellularLocation>
    <subcellularLocation>
        <location evidence="2">Cytoplasm</location>
        <location evidence="2">Stress granule</location>
    </subcellularLocation>
    <subcellularLocation>
        <location evidence="4">Cytoplasm</location>
    </subcellularLocation>
    <subcellularLocation>
        <location evidence="4">Cell projection</location>
        <location evidence="4">Dendrite</location>
    </subcellularLocation>
    <subcellularLocation>
        <location evidence="4">Cell projection</location>
        <location evidence="4">Dendritic spine</location>
    </subcellularLocation>
    <subcellularLocation>
        <location evidence="4">Cell projection</location>
        <location evidence="4">Axon</location>
    </subcellularLocation>
    <subcellularLocation>
        <location evidence="2">Nucleus envelope</location>
    </subcellularLocation>
    <subcellularLocation>
        <location evidence="4">Postsynapse</location>
    </subcellularLocation>
    <text evidence="2 4">Specifically localizes to cytoplasmic ribonucleoprotein membraneless compartments (By similarity). Localizes to stress granules following phosphorylation at Ser-449 by PAK1 (By similarity). Adjacent to Z-lines in muscles (By similarity).</text>
</comment>
<comment type="domain">
    <text evidence="4">Disordered region at the C-terminus undergoes liquid-liquid phase separation (LLPS) for the formation of a membraneless compartment that stores mRNAs.</text>
</comment>
<comment type="domain">
    <text evidence="2">The tandem Agenet-like domains preferentially recognize trimethylated histone peptides.</text>
</comment>
<comment type="domain">
    <text evidence="2">CC1 and CC2 domains are required for homodimerization and FXR1-network nucleation. CC domains also mediate interaction with other proteins containing similar CC domains.</text>
</comment>
<comment type="PTM">
    <text evidence="2 4">Phosphorylation at Ser-449 by PAK1 promotes its relocalization to stress granules and activity (By similarity). Phosphorylated by MAPK1/ERK2, promoting subsequent phosphorylation by GSK3B. Phosphorylated by GSK3B, promoting ubiquitination and degradation by the proteasome (By similarity).</text>
</comment>
<comment type="PTM">
    <text evidence="2 4">Ubiquitinated by the SCF(FBXO4) complex, leading to its degradation by the proteasome: ubiquitination by the SCF(FBXO4) complex takes place following phosphorylation by GSK3B. Ubiquitinated and degraded in a GSK3B-dependent manner in during both scaling and sleep deprivation (By similarity). Ubiquitinated via 'Lys-63'-linked ubiquitin, leading to its degradation: interaction with CEP63 inhibits 'Lys-63'-linked ubiquitination (By similarity).</text>
</comment>
<comment type="miscellaneous">
    <text evidence="9">This protein corresponds to isoform B in mouse and isoform 2 in human.</text>
</comment>
<comment type="similarity">
    <text evidence="9">Belongs to the FMR1 family.</text>
</comment>
<protein>
    <recommendedName>
        <fullName evidence="9">RNA-binding protein FXR1</fullName>
    </recommendedName>
    <alternativeName>
        <fullName evidence="11">FMR1 autosomal homolog 1</fullName>
    </alternativeName>
</protein>
<name>FXR1_RAT</name>
<dbReference type="EMBL" id="BC083807">
    <property type="protein sequence ID" value="AAH83807.1"/>
    <property type="molecule type" value="mRNA"/>
</dbReference>
<dbReference type="RefSeq" id="NP_001012179.1">
    <property type="nucleotide sequence ID" value="NM_001012179.2"/>
</dbReference>
<dbReference type="SMR" id="Q5XI81"/>
<dbReference type="BioGRID" id="263063">
    <property type="interactions" value="2"/>
</dbReference>
<dbReference type="FunCoup" id="Q5XI81">
    <property type="interactions" value="3123"/>
</dbReference>
<dbReference type="IntAct" id="Q5XI81">
    <property type="interactions" value="4"/>
</dbReference>
<dbReference type="MINT" id="Q5XI81"/>
<dbReference type="STRING" id="10116.ENSRNOP00000069834"/>
<dbReference type="BindingDB" id="Q5XI81"/>
<dbReference type="iPTMnet" id="Q5XI81"/>
<dbReference type="PhosphoSitePlus" id="Q5XI81"/>
<dbReference type="jPOST" id="Q5XI81"/>
<dbReference type="PaxDb" id="10116-ENSRNOP00000065667"/>
<dbReference type="GeneID" id="361927"/>
<dbReference type="KEGG" id="rno:361927"/>
<dbReference type="UCSC" id="RGD:1311733">
    <property type="organism name" value="rat"/>
</dbReference>
<dbReference type="AGR" id="RGD:1311733"/>
<dbReference type="CTD" id="8087"/>
<dbReference type="RGD" id="1311733">
    <property type="gene designation" value="Fxr1"/>
</dbReference>
<dbReference type="eggNOG" id="ENOG502QPKJ">
    <property type="taxonomic scope" value="Eukaryota"/>
</dbReference>
<dbReference type="InParanoid" id="Q5XI81"/>
<dbReference type="PhylomeDB" id="Q5XI81"/>
<dbReference type="PRO" id="PR:Q5XI81"/>
<dbReference type="Proteomes" id="UP000002494">
    <property type="component" value="Unplaced"/>
</dbReference>
<dbReference type="GO" id="GO:0030424">
    <property type="term" value="C:axon"/>
    <property type="evidence" value="ECO:0000266"/>
    <property type="project" value="RGD"/>
</dbReference>
<dbReference type="GO" id="GO:0043034">
    <property type="term" value="C:costamere"/>
    <property type="evidence" value="ECO:0000266"/>
    <property type="project" value="RGD"/>
</dbReference>
<dbReference type="GO" id="GO:0005737">
    <property type="term" value="C:cytoplasm"/>
    <property type="evidence" value="ECO:0000250"/>
    <property type="project" value="UniProtKB"/>
</dbReference>
<dbReference type="GO" id="GO:0036464">
    <property type="term" value="C:cytoplasmic ribonucleoprotein granule"/>
    <property type="evidence" value="ECO:0000250"/>
    <property type="project" value="UniProtKB"/>
</dbReference>
<dbReference type="GO" id="GO:0010494">
    <property type="term" value="C:cytoplasmic stress granule"/>
    <property type="evidence" value="ECO:0000266"/>
    <property type="project" value="RGD"/>
</dbReference>
<dbReference type="GO" id="GO:0005829">
    <property type="term" value="C:cytosol"/>
    <property type="evidence" value="ECO:0000266"/>
    <property type="project" value="RGD"/>
</dbReference>
<dbReference type="GO" id="GO:0030425">
    <property type="term" value="C:dendrite"/>
    <property type="evidence" value="ECO:0000266"/>
    <property type="project" value="RGD"/>
</dbReference>
<dbReference type="GO" id="GO:0043197">
    <property type="term" value="C:dendritic spine"/>
    <property type="evidence" value="ECO:0000266"/>
    <property type="project" value="RGD"/>
</dbReference>
<dbReference type="GO" id="GO:0098978">
    <property type="term" value="C:glutamatergic synapse"/>
    <property type="evidence" value="ECO:0000266"/>
    <property type="project" value="RGD"/>
</dbReference>
<dbReference type="GO" id="GO:0043232">
    <property type="term" value="C:intracellular membraneless organelle"/>
    <property type="evidence" value="ECO:0000250"/>
    <property type="project" value="UniProtKB"/>
</dbReference>
<dbReference type="GO" id="GO:0043005">
    <property type="term" value="C:neuron projection"/>
    <property type="evidence" value="ECO:0000318"/>
    <property type="project" value="GO_Central"/>
</dbReference>
<dbReference type="GO" id="GO:0005635">
    <property type="term" value="C:nuclear envelope"/>
    <property type="evidence" value="ECO:0000250"/>
    <property type="project" value="UniProtKB"/>
</dbReference>
<dbReference type="GO" id="GO:0005634">
    <property type="term" value="C:nucleus"/>
    <property type="evidence" value="ECO:0000266"/>
    <property type="project" value="RGD"/>
</dbReference>
<dbReference type="GO" id="GO:0048471">
    <property type="term" value="C:perinuclear region of cytoplasm"/>
    <property type="evidence" value="ECO:0000266"/>
    <property type="project" value="RGD"/>
</dbReference>
<dbReference type="GO" id="GO:0098794">
    <property type="term" value="C:postsynapse"/>
    <property type="evidence" value="ECO:0000266"/>
    <property type="project" value="RGD"/>
</dbReference>
<dbReference type="GO" id="GO:0098793">
    <property type="term" value="C:presynapse"/>
    <property type="evidence" value="ECO:0007669"/>
    <property type="project" value="GOC"/>
</dbReference>
<dbReference type="GO" id="GO:0035770">
    <property type="term" value="C:ribonucleoprotein granule"/>
    <property type="evidence" value="ECO:0000266"/>
    <property type="project" value="RGD"/>
</dbReference>
<dbReference type="GO" id="GO:0005840">
    <property type="term" value="C:ribosome"/>
    <property type="evidence" value="ECO:0000266"/>
    <property type="project" value="RGD"/>
</dbReference>
<dbReference type="GO" id="GO:0140693">
    <property type="term" value="F:molecular condensate scaffold activity"/>
    <property type="evidence" value="ECO:0000250"/>
    <property type="project" value="UniProtKB"/>
</dbReference>
<dbReference type="GO" id="GO:0035925">
    <property type="term" value="F:mRNA 3'-UTR AU-rich region binding"/>
    <property type="evidence" value="ECO:0000250"/>
    <property type="project" value="UniProtKB"/>
</dbReference>
<dbReference type="GO" id="GO:0003730">
    <property type="term" value="F:mRNA 3'-UTR binding"/>
    <property type="evidence" value="ECO:0000266"/>
    <property type="project" value="RGD"/>
</dbReference>
<dbReference type="GO" id="GO:0003729">
    <property type="term" value="F:mRNA binding"/>
    <property type="evidence" value="ECO:0000250"/>
    <property type="project" value="UniProtKB"/>
</dbReference>
<dbReference type="GO" id="GO:0046982">
    <property type="term" value="F:protein heterodimerization activity"/>
    <property type="evidence" value="ECO:0000250"/>
    <property type="project" value="UniProtKB"/>
</dbReference>
<dbReference type="GO" id="GO:0042803">
    <property type="term" value="F:protein homodimerization activity"/>
    <property type="evidence" value="ECO:0000250"/>
    <property type="project" value="UniProtKB"/>
</dbReference>
<dbReference type="GO" id="GO:0043021">
    <property type="term" value="F:ribonucleoprotein complex binding"/>
    <property type="evidence" value="ECO:0000266"/>
    <property type="project" value="RGD"/>
</dbReference>
<dbReference type="GO" id="GO:0003723">
    <property type="term" value="F:RNA binding"/>
    <property type="evidence" value="ECO:0000266"/>
    <property type="project" value="RGD"/>
</dbReference>
<dbReference type="GO" id="GO:0033592">
    <property type="term" value="F:RNA strand annealing activity"/>
    <property type="evidence" value="ECO:0000250"/>
    <property type="project" value="UniProtKB"/>
</dbReference>
<dbReference type="GO" id="GO:0045182">
    <property type="term" value="F:translation regulator activity"/>
    <property type="evidence" value="ECO:0000318"/>
    <property type="project" value="GO_Central"/>
</dbReference>
<dbReference type="GO" id="GO:0048513">
    <property type="term" value="P:animal organ development"/>
    <property type="evidence" value="ECO:0000318"/>
    <property type="project" value="GO_Central"/>
</dbReference>
<dbReference type="GO" id="GO:0021542">
    <property type="term" value="P:dentate gyrus development"/>
    <property type="evidence" value="ECO:0000250"/>
    <property type="project" value="UniProtKB"/>
</dbReference>
<dbReference type="GO" id="GO:0140694">
    <property type="term" value="P:membraneless organelle assembly"/>
    <property type="evidence" value="ECO:0000250"/>
    <property type="project" value="UniProtKB"/>
</dbReference>
<dbReference type="GO" id="GO:0061157">
    <property type="term" value="P:mRNA destabilization"/>
    <property type="evidence" value="ECO:0000250"/>
    <property type="project" value="UniProtKB"/>
</dbReference>
<dbReference type="GO" id="GO:0051028">
    <property type="term" value="P:mRNA transport"/>
    <property type="evidence" value="ECO:0000318"/>
    <property type="project" value="GO_Central"/>
</dbReference>
<dbReference type="GO" id="GO:0007517">
    <property type="term" value="P:muscle organ development"/>
    <property type="evidence" value="ECO:0000250"/>
    <property type="project" value="UniProtKB"/>
</dbReference>
<dbReference type="GO" id="GO:0050728">
    <property type="term" value="P:negative regulation of inflammatory response"/>
    <property type="evidence" value="ECO:0000250"/>
    <property type="project" value="UniProtKB"/>
</dbReference>
<dbReference type="GO" id="GO:1900272">
    <property type="term" value="P:negative regulation of long-term synaptic potentiation"/>
    <property type="evidence" value="ECO:0000250"/>
    <property type="project" value="UniProtKB"/>
</dbReference>
<dbReference type="GO" id="GO:1902373">
    <property type="term" value="P:negative regulation of mRNA catabolic process"/>
    <property type="evidence" value="ECO:0000266"/>
    <property type="project" value="RGD"/>
</dbReference>
<dbReference type="GO" id="GO:0017148">
    <property type="term" value="P:negative regulation of translation"/>
    <property type="evidence" value="ECO:0000250"/>
    <property type="project" value="UniProtKB"/>
</dbReference>
<dbReference type="GO" id="GO:0032720">
    <property type="term" value="P:negative regulation of tumor necrosis factor production"/>
    <property type="evidence" value="ECO:0000250"/>
    <property type="project" value="UniProtKB"/>
</dbReference>
<dbReference type="GO" id="GO:0051292">
    <property type="term" value="P:nuclear pore complex assembly"/>
    <property type="evidence" value="ECO:0000250"/>
    <property type="project" value="UniProtKB"/>
</dbReference>
<dbReference type="GO" id="GO:0051664">
    <property type="term" value="P:nuclear pore localization"/>
    <property type="evidence" value="ECO:0000250"/>
    <property type="project" value="UniProtKB"/>
</dbReference>
<dbReference type="GO" id="GO:0048170">
    <property type="term" value="P:positive regulation of long-term neuronal synaptic plasticity"/>
    <property type="evidence" value="ECO:0000318"/>
    <property type="project" value="GO_Central"/>
</dbReference>
<dbReference type="GO" id="GO:2000637">
    <property type="term" value="P:positive regulation of miRNA-mediated gene silencing"/>
    <property type="evidence" value="ECO:0000250"/>
    <property type="project" value="UniProtKB"/>
</dbReference>
<dbReference type="GO" id="GO:0035025">
    <property type="term" value="P:positive regulation of Rho protein signal transduction"/>
    <property type="evidence" value="ECO:0000266"/>
    <property type="project" value="RGD"/>
</dbReference>
<dbReference type="GO" id="GO:0045727">
    <property type="term" value="P:positive regulation of translation"/>
    <property type="evidence" value="ECO:0000250"/>
    <property type="project" value="UniProtKB"/>
</dbReference>
<dbReference type="GO" id="GO:0010608">
    <property type="term" value="P:post-transcriptional regulation of gene expression"/>
    <property type="evidence" value="ECO:0000250"/>
    <property type="project" value="UniProtKB"/>
</dbReference>
<dbReference type="GO" id="GO:0045187">
    <property type="term" value="P:regulation of circadian sleep/wake cycle, sleep"/>
    <property type="evidence" value="ECO:0000250"/>
    <property type="project" value="UniProtKB"/>
</dbReference>
<dbReference type="GO" id="GO:0043488">
    <property type="term" value="P:regulation of mRNA stability"/>
    <property type="evidence" value="ECO:0000318"/>
    <property type="project" value="GO_Central"/>
</dbReference>
<dbReference type="GO" id="GO:0050767">
    <property type="term" value="P:regulation of neurogenesis"/>
    <property type="evidence" value="ECO:0000250"/>
    <property type="project" value="UniProtKB"/>
</dbReference>
<dbReference type="GO" id="GO:0051966">
    <property type="term" value="P:regulation of synaptic transmission, glutamatergic"/>
    <property type="evidence" value="ECO:0000250"/>
    <property type="project" value="UniProtKB"/>
</dbReference>
<dbReference type="GO" id="GO:0099577">
    <property type="term" value="P:regulation of translation at presynapse, modulating synaptic transmission"/>
    <property type="evidence" value="ECO:0000318"/>
    <property type="project" value="GO_Central"/>
</dbReference>
<dbReference type="GO" id="GO:0060538">
    <property type="term" value="P:skeletal muscle organ development"/>
    <property type="evidence" value="ECO:0000266"/>
    <property type="project" value="RGD"/>
</dbReference>
<dbReference type="GO" id="GO:0007286">
    <property type="term" value="P:spermatid development"/>
    <property type="evidence" value="ECO:0000250"/>
    <property type="project" value="UniProtKB"/>
</dbReference>
<dbReference type="CDD" id="cd22504">
    <property type="entry name" value="KH_I_FXR1_rpt1"/>
    <property type="match status" value="1"/>
</dbReference>
<dbReference type="CDD" id="cd22507">
    <property type="entry name" value="KH_I_FXR1_rpt2"/>
    <property type="match status" value="1"/>
</dbReference>
<dbReference type="CDD" id="cd22510">
    <property type="entry name" value="KH_I_FXR1_rpt3"/>
    <property type="match status" value="1"/>
</dbReference>
<dbReference type="CDD" id="cd20472">
    <property type="entry name" value="Tudor_Agenet_FXR1_rpt1"/>
    <property type="match status" value="1"/>
</dbReference>
<dbReference type="CDD" id="cd20475">
    <property type="entry name" value="Tudor_Agenet_FXR1_rpt2"/>
    <property type="match status" value="1"/>
</dbReference>
<dbReference type="FunFam" id="2.30.30.140:FF:000001">
    <property type="entry name" value="Fragile X mental retardation 1, isoform CRA_e"/>
    <property type="match status" value="1"/>
</dbReference>
<dbReference type="FunFam" id="2.30.30.140:FF:000002">
    <property type="entry name" value="Fragile X mental retardation 1, isoform CRA_e"/>
    <property type="match status" value="1"/>
</dbReference>
<dbReference type="FunFam" id="3.30.1370.10:FF:000004">
    <property type="entry name" value="Fragile X mental retardation 1, isoform CRA_e"/>
    <property type="match status" value="1"/>
</dbReference>
<dbReference type="FunFam" id="3.30.1370.10:FF:000017">
    <property type="entry name" value="Fragile X mental retardation syndrome-related protein 1"/>
    <property type="match status" value="1"/>
</dbReference>
<dbReference type="Gene3D" id="2.30.30.140">
    <property type="match status" value="2"/>
</dbReference>
<dbReference type="Gene3D" id="3.30.1370.10">
    <property type="entry name" value="K Homology domain, type 1"/>
    <property type="match status" value="2"/>
</dbReference>
<dbReference type="InterPro" id="IPR008395">
    <property type="entry name" value="Agenet-like_dom"/>
</dbReference>
<dbReference type="InterPro" id="IPR040148">
    <property type="entry name" value="FMR1"/>
</dbReference>
<dbReference type="InterPro" id="IPR022034">
    <property type="entry name" value="FMR1-like_C_core"/>
</dbReference>
<dbReference type="InterPro" id="IPR040472">
    <property type="entry name" value="FMRP_KH0"/>
</dbReference>
<dbReference type="InterPro" id="IPR032172">
    <property type="entry name" value="FXR1_C1"/>
</dbReference>
<dbReference type="InterPro" id="IPR004087">
    <property type="entry name" value="KH_dom"/>
</dbReference>
<dbReference type="InterPro" id="IPR004088">
    <property type="entry name" value="KH_dom_type_1"/>
</dbReference>
<dbReference type="InterPro" id="IPR036612">
    <property type="entry name" value="KH_dom_type_1_sf"/>
</dbReference>
<dbReference type="InterPro" id="IPR047494">
    <property type="entry name" value="KH_I_FXR1_rpt1"/>
</dbReference>
<dbReference type="InterPro" id="IPR047495">
    <property type="entry name" value="KH_I_FXR1_rpt2"/>
</dbReference>
<dbReference type="InterPro" id="IPR047496">
    <property type="entry name" value="KH_I_FXR1_rpt3"/>
</dbReference>
<dbReference type="InterPro" id="IPR047425">
    <property type="entry name" value="Tudor_Agenet_FXR1_rpt1"/>
</dbReference>
<dbReference type="InterPro" id="IPR047427">
    <property type="entry name" value="Tudor_Agenet_FXR1_rpt2"/>
</dbReference>
<dbReference type="InterPro" id="IPR041560">
    <property type="entry name" value="Tudor_FRM1"/>
</dbReference>
<dbReference type="PANTHER" id="PTHR10603">
    <property type="entry name" value="FRAGILE X MENTAL RETARDATION SYNDROME-RELATED PROTEIN"/>
    <property type="match status" value="1"/>
</dbReference>
<dbReference type="PANTHER" id="PTHR10603:SF6">
    <property type="entry name" value="RNA-BINDING PROTEIN FXR1"/>
    <property type="match status" value="1"/>
</dbReference>
<dbReference type="Pfam" id="PF05641">
    <property type="entry name" value="Agenet"/>
    <property type="match status" value="1"/>
</dbReference>
<dbReference type="Pfam" id="PF12235">
    <property type="entry name" value="FXMRP1_C_core"/>
    <property type="match status" value="1"/>
</dbReference>
<dbReference type="Pfam" id="PF16096">
    <property type="entry name" value="FXR_C1"/>
    <property type="match status" value="1"/>
</dbReference>
<dbReference type="Pfam" id="PF00013">
    <property type="entry name" value="KH_1"/>
    <property type="match status" value="2"/>
</dbReference>
<dbReference type="Pfam" id="PF17904">
    <property type="entry name" value="KH_9"/>
    <property type="match status" value="1"/>
</dbReference>
<dbReference type="Pfam" id="PF18336">
    <property type="entry name" value="Tudor_FRX1"/>
    <property type="match status" value="1"/>
</dbReference>
<dbReference type="SMART" id="SM00322">
    <property type="entry name" value="KH"/>
    <property type="match status" value="2"/>
</dbReference>
<dbReference type="SUPFAM" id="SSF54791">
    <property type="entry name" value="Eukaryotic type KH-domain (KH-domain type I)"/>
    <property type="match status" value="2"/>
</dbReference>
<dbReference type="PROSITE" id="PS51641">
    <property type="entry name" value="AGENET_LIKE"/>
    <property type="match status" value="2"/>
</dbReference>
<dbReference type="PROSITE" id="PS50084">
    <property type="entry name" value="KH_TYPE_1"/>
    <property type="match status" value="2"/>
</dbReference>
<reference key="1">
    <citation type="journal article" date="2004" name="Genome Res.">
        <title>The status, quality, and expansion of the NIH full-length cDNA project: the Mammalian Gene Collection (MGC).</title>
        <authorList>
            <consortium name="The MGC Project Team"/>
        </authorList>
    </citation>
    <scope>NUCLEOTIDE SEQUENCE [LARGE SCALE MRNA]</scope>
    <source>
        <tissue>Kidney</tissue>
    </source>
</reference>
<reference key="2">
    <citation type="journal article" date="2012" name="Nat. Commun.">
        <title>Quantitative maps of protein phosphorylation sites across 14 different rat organs and tissues.</title>
        <authorList>
            <person name="Lundby A."/>
            <person name="Secher A."/>
            <person name="Lage K."/>
            <person name="Nordsborg N.B."/>
            <person name="Dmytriyev A."/>
            <person name="Lundby C."/>
            <person name="Olsen J.V."/>
        </authorList>
    </citation>
    <scope>PHOSPHORYLATION [LARGE SCALE ANALYSIS] AT THR-398; SER-432; SER-435; SER-438; SER-449; SER-452; THR-512 AND SER-514</scope>
    <scope>IDENTIFICATION BY MASS SPECTROMETRY [LARGE SCALE ANALYSIS]</scope>
</reference>
<feature type="initiator methionine" description="Removed" evidence="2">
    <location>
        <position position="1"/>
    </location>
</feature>
<feature type="chain" id="PRO_0000248488" description="RNA-binding protein FXR1">
    <location>
        <begin position="2"/>
        <end position="568"/>
    </location>
</feature>
<feature type="domain" description="Agenet-like 1" evidence="7">
    <location>
        <begin position="4"/>
        <end position="50"/>
    </location>
</feature>
<feature type="domain" description="Agenet-like 2" evidence="7">
    <location>
        <begin position="63"/>
        <end position="115"/>
    </location>
</feature>
<feature type="domain" description="KH 1" evidence="6">
    <location>
        <begin position="218"/>
        <end position="279"/>
    </location>
</feature>
<feature type="domain" description="KH 2" evidence="6">
    <location>
        <begin position="281"/>
        <end position="351"/>
    </location>
</feature>
<feature type="region of interest" description="CC1 domain" evidence="2">
    <location>
        <begin position="201"/>
        <end position="208"/>
    </location>
</feature>
<feature type="region of interest" description="CC2 domain" evidence="2">
    <location>
        <begin position="353"/>
        <end position="379"/>
    </location>
</feature>
<feature type="region of interest" description="Disordered" evidence="8">
    <location>
        <begin position="380"/>
        <end position="568"/>
    </location>
</feature>
<feature type="region of interest" description="RNA-binding RGG-box" evidence="5">
    <location>
        <begin position="471"/>
        <end position="486"/>
    </location>
</feature>
<feature type="compositionally biased region" description="Low complexity" evidence="8">
    <location>
        <begin position="404"/>
        <end position="414"/>
    </location>
</feature>
<feature type="compositionally biased region" description="Polar residues" evidence="8">
    <location>
        <begin position="423"/>
        <end position="439"/>
    </location>
</feature>
<feature type="compositionally biased region" description="Gly residues" evidence="8">
    <location>
        <begin position="474"/>
        <end position="489"/>
    </location>
</feature>
<feature type="compositionally biased region" description="Acidic residues" evidence="8">
    <location>
        <begin position="512"/>
        <end position="522"/>
    </location>
</feature>
<feature type="compositionally biased region" description="Basic residues" evidence="8">
    <location>
        <begin position="528"/>
        <end position="538"/>
    </location>
</feature>
<feature type="modified residue" description="N-acetylalanine" evidence="2">
    <location>
        <position position="2"/>
    </location>
</feature>
<feature type="modified residue" description="Phosphotyrosine" evidence="4">
    <location>
        <position position="68"/>
    </location>
</feature>
<feature type="modified residue" description="Phosphothreonine" evidence="12">
    <location>
        <position position="398"/>
    </location>
</feature>
<feature type="modified residue" description="Phosphothreonine" evidence="2">
    <location>
        <position position="430"/>
    </location>
</feature>
<feature type="modified residue" description="Phosphoserine" evidence="12">
    <location>
        <position position="432"/>
    </location>
</feature>
<feature type="modified residue" description="Phosphoserine" evidence="12">
    <location>
        <position position="435"/>
    </location>
</feature>
<feature type="modified residue" description="Phosphoserine" evidence="12">
    <location>
        <position position="438"/>
    </location>
</feature>
<feature type="modified residue" description="Phosphoserine" evidence="12">
    <location>
        <position position="449"/>
    </location>
</feature>
<feature type="modified residue" description="Phosphoserine" evidence="12">
    <location>
        <position position="452"/>
    </location>
</feature>
<feature type="modified residue" description="Asymmetric dimethylarginine; alternate" evidence="1">
    <location>
        <position position="476"/>
    </location>
</feature>
<feature type="modified residue" description="Omega-N-methylarginine; alternate" evidence="1">
    <location>
        <position position="476"/>
    </location>
</feature>
<feature type="modified residue" description="Asymmetric dimethylarginine; alternate" evidence="1">
    <location>
        <position position="482"/>
    </location>
</feature>
<feature type="modified residue" description="Omega-N-methylarginine; alternate" evidence="1">
    <location>
        <position position="482"/>
    </location>
</feature>
<feature type="modified residue" description="Asymmetric dimethylarginine; alternate" evidence="1">
    <location>
        <position position="484"/>
    </location>
</feature>
<feature type="modified residue" description="Omega-N-methylarginine; alternate" evidence="1">
    <location>
        <position position="484"/>
    </location>
</feature>
<feature type="modified residue" description="Phosphothreonine" evidence="12">
    <location>
        <position position="512"/>
    </location>
</feature>
<feature type="modified residue" description="Phosphoserine" evidence="12">
    <location>
        <position position="514"/>
    </location>
</feature>
<feature type="modified residue" description="Phosphoserine" evidence="3">
    <location>
        <position position="553"/>
    </location>
</feature>
<feature type="cross-link" description="Glycyl lysine isopeptide (Lys-Gly) (interchain with G-Cter in SUMO2)" evidence="2">
    <location>
        <position position="56"/>
    </location>
</feature>
<sequence>MAELTVEVRGSNGAFYKVFIKDVHEDSLTVVFENNWQPERQVPFNEVRLPPPPDIKKEISEGDEVEVYSRANDQEPCGWWLAKVRMMKGEFYVIEYAACDATYNEIVTFERLRPVNQNKTVKKNTFFKCTVDVPEDLREACANENAHKDFKKAVGACRIFYHPETTQLMILSASEATVKRVNILSDMHLRSIRTKLMLMSRNEEATKHLECTKQLAAAFHEEFVVREDLMGLAIGTHGSNIQQARKVPGVTAIELDEDTGTFRIYGESAEAVKKARGFLEFVEDFIQVPRNLVGKVIGKNGKVIQEIVDKSGVVRVRIEGDNENKLPREDGMVPFVFVGTKESIGNVQVLLEYHIAYLKEVEQLRMERLQIDEQLRQIGMGFRPSSTRGPEKEKGYATDESTVSSVQGSRSYSGRGRGRRGPNYTSGYGTNSELSNPSETESERKDELSDWSLAGEDDRETRHQRDSRRRPGGRGRSVSGGRGRGGPRGGKSSISSVLKDPDSNPYSLLDNTESDQTADTDASESHHSTNRRRRSRRRRTDEDAVLMDGMTESDTASVNENGLGKRCD</sequence>
<evidence type="ECO:0000250" key="1">
    <source>
        <dbReference type="UniProtKB" id="P35922"/>
    </source>
</evidence>
<evidence type="ECO:0000250" key="2">
    <source>
        <dbReference type="UniProtKB" id="P51114"/>
    </source>
</evidence>
<evidence type="ECO:0000250" key="3">
    <source>
        <dbReference type="UniProtKB" id="P51116"/>
    </source>
</evidence>
<evidence type="ECO:0000250" key="4">
    <source>
        <dbReference type="UniProtKB" id="Q61584"/>
    </source>
</evidence>
<evidence type="ECO:0000255" key="5"/>
<evidence type="ECO:0000255" key="6">
    <source>
        <dbReference type="PROSITE-ProRule" id="PRU00117"/>
    </source>
</evidence>
<evidence type="ECO:0000255" key="7">
    <source>
        <dbReference type="PROSITE-ProRule" id="PRU00973"/>
    </source>
</evidence>
<evidence type="ECO:0000256" key="8">
    <source>
        <dbReference type="SAM" id="MobiDB-lite"/>
    </source>
</evidence>
<evidence type="ECO:0000305" key="9"/>
<evidence type="ECO:0000312" key="10">
    <source>
        <dbReference type="EMBL" id="AAH83807.1"/>
    </source>
</evidence>
<evidence type="ECO:0000312" key="11">
    <source>
        <dbReference type="RGD" id="1311733"/>
    </source>
</evidence>
<evidence type="ECO:0007744" key="12">
    <source>
    </source>
</evidence>